<evidence type="ECO:0000250" key="1">
    <source>
        <dbReference type="UniProtKB" id="Q8TCG2"/>
    </source>
</evidence>
<evidence type="ECO:0000250" key="2">
    <source>
        <dbReference type="UniProtKB" id="Q9BTU6"/>
    </source>
</evidence>
<evidence type="ECO:0000255" key="3">
    <source>
        <dbReference type="PROSITE-ProRule" id="PRU00269"/>
    </source>
</evidence>
<evidence type="ECO:0000256" key="4">
    <source>
        <dbReference type="SAM" id="MobiDB-lite"/>
    </source>
</evidence>
<evidence type="ECO:0000305" key="5"/>
<name>P4K2B_XENTR</name>
<protein>
    <recommendedName>
        <fullName>Phosphatidylinositol 4-kinase type 2-beta</fullName>
        <ecNumber evidence="1">2.7.1.67</ecNumber>
    </recommendedName>
    <alternativeName>
        <fullName>Phosphatidylinositol 4-kinase type II-beta</fullName>
    </alternativeName>
</protein>
<dbReference type="EC" id="2.7.1.67" evidence="1"/>
<dbReference type="EMBL" id="CR761607">
    <property type="protein sequence ID" value="CAJ83481.1"/>
    <property type="molecule type" value="mRNA"/>
</dbReference>
<dbReference type="RefSeq" id="NP_001016953.1">
    <property type="nucleotide sequence ID" value="NM_001016953.2"/>
</dbReference>
<dbReference type="SMR" id="Q28G26"/>
<dbReference type="FunCoup" id="Q28G26">
    <property type="interactions" value="1991"/>
</dbReference>
<dbReference type="STRING" id="8364.ENSXETP00000031027"/>
<dbReference type="PaxDb" id="8364-ENSXETP00000002097"/>
<dbReference type="GeneID" id="549707"/>
<dbReference type="KEGG" id="xtr:549707"/>
<dbReference type="AGR" id="Xenbase:XB-GENE-974293"/>
<dbReference type="CTD" id="55300"/>
<dbReference type="Xenbase" id="XB-GENE-974293">
    <property type="gene designation" value="pi4k2b"/>
</dbReference>
<dbReference type="eggNOG" id="KOG2381">
    <property type="taxonomic scope" value="Eukaryota"/>
</dbReference>
<dbReference type="InParanoid" id="Q28G26"/>
<dbReference type="OMA" id="PYAKVPF"/>
<dbReference type="OrthoDB" id="3349449at2759"/>
<dbReference type="Reactome" id="R-XTR-1483248">
    <property type="pathway name" value="Synthesis of PIPs at the ER membrane"/>
</dbReference>
<dbReference type="Reactome" id="R-XTR-1660499">
    <property type="pathway name" value="Synthesis of PIPs at the plasma membrane"/>
</dbReference>
<dbReference type="Reactome" id="R-XTR-1660514">
    <property type="pathway name" value="Synthesis of PIPs at the Golgi membrane"/>
</dbReference>
<dbReference type="Reactome" id="R-XTR-1660516">
    <property type="pathway name" value="Synthesis of PIPs at the early endosome membrane"/>
</dbReference>
<dbReference type="Proteomes" id="UP000008143">
    <property type="component" value="Chromosome 1"/>
</dbReference>
<dbReference type="GO" id="GO:0005829">
    <property type="term" value="C:cytosol"/>
    <property type="evidence" value="ECO:0000250"/>
    <property type="project" value="UniProtKB"/>
</dbReference>
<dbReference type="GO" id="GO:0031901">
    <property type="term" value="C:early endosome membrane"/>
    <property type="evidence" value="ECO:0007669"/>
    <property type="project" value="UniProtKB-SubCell"/>
</dbReference>
<dbReference type="GO" id="GO:0005789">
    <property type="term" value="C:endoplasmic reticulum membrane"/>
    <property type="evidence" value="ECO:0000250"/>
    <property type="project" value="UniProtKB"/>
</dbReference>
<dbReference type="GO" id="GO:0000139">
    <property type="term" value="C:Golgi membrane"/>
    <property type="evidence" value="ECO:0000250"/>
    <property type="project" value="UniProtKB"/>
</dbReference>
<dbReference type="GO" id="GO:0005886">
    <property type="term" value="C:plasma membrane"/>
    <property type="evidence" value="ECO:0000250"/>
    <property type="project" value="UniProtKB"/>
</dbReference>
<dbReference type="GO" id="GO:0004430">
    <property type="term" value="F:1-phosphatidylinositol 4-kinase activity"/>
    <property type="evidence" value="ECO:0000250"/>
    <property type="project" value="UniProtKB"/>
</dbReference>
<dbReference type="GO" id="GO:0005524">
    <property type="term" value="F:ATP binding"/>
    <property type="evidence" value="ECO:0007669"/>
    <property type="project" value="UniProtKB-KW"/>
</dbReference>
<dbReference type="GO" id="GO:0046854">
    <property type="term" value="P:phosphatidylinositol phosphate biosynthetic process"/>
    <property type="evidence" value="ECO:0000250"/>
    <property type="project" value="UniProtKB"/>
</dbReference>
<dbReference type="Gene3D" id="1.10.1070.20">
    <property type="match status" value="1"/>
</dbReference>
<dbReference type="InterPro" id="IPR039756">
    <property type="entry name" value="Lsb6/PI4K2"/>
</dbReference>
<dbReference type="InterPro" id="IPR000403">
    <property type="entry name" value="PI3/4_kinase_cat_dom"/>
</dbReference>
<dbReference type="PANTHER" id="PTHR12865:SF6">
    <property type="entry name" value="PHOSPHATIDYLINOSITOL 4-KINASE TYPE 2-BETA"/>
    <property type="match status" value="1"/>
</dbReference>
<dbReference type="PANTHER" id="PTHR12865">
    <property type="entry name" value="PHOSPHATIDYLINOSITOL 4-KINASE TYPE-II"/>
    <property type="match status" value="1"/>
</dbReference>
<dbReference type="Pfam" id="PF00454">
    <property type="entry name" value="PI3_PI4_kinase"/>
    <property type="match status" value="1"/>
</dbReference>
<dbReference type="PROSITE" id="PS50290">
    <property type="entry name" value="PI3_4_KINASE_3"/>
    <property type="match status" value="1"/>
</dbReference>
<accession>Q28G26</accession>
<reference key="1">
    <citation type="submission" date="2006-10" db="EMBL/GenBank/DDBJ databases">
        <authorList>
            <consortium name="Sanger Xenopus tropicalis EST/cDNA project"/>
        </authorList>
    </citation>
    <scope>NUCLEOTIDE SEQUENCE [LARGE SCALE MRNA]</scope>
    <source>
        <tissue>Gastrula</tissue>
    </source>
</reference>
<comment type="function">
    <text evidence="1">Contributes to the overall PI4-kinase activity of the cell. This contribution may be especially significant in plasma membrane, endosomal and Golgi compartments. The phosphorylation of phosphatidylinositol (PI) to PI4P is the first committed step in the generation of phosphatidylinositol 4,5-bisphosphate (PIP2), a precursor of the second messenger inositol 1,4,5-trisphosphate (InsP3).</text>
</comment>
<comment type="catalytic activity">
    <reaction evidence="1">
        <text>a 1,2-diacyl-sn-glycero-3-phospho-(1D-myo-inositol) + ATP = a 1,2-diacyl-sn-glycero-3-phospho-(1D-myo-inositol 4-phosphate) + ADP + H(+)</text>
        <dbReference type="Rhea" id="RHEA:19877"/>
        <dbReference type="ChEBI" id="CHEBI:15378"/>
        <dbReference type="ChEBI" id="CHEBI:30616"/>
        <dbReference type="ChEBI" id="CHEBI:57880"/>
        <dbReference type="ChEBI" id="CHEBI:58178"/>
        <dbReference type="ChEBI" id="CHEBI:456216"/>
        <dbReference type="EC" id="2.7.1.67"/>
    </reaction>
    <physiologicalReaction direction="left-to-right" evidence="1">
        <dbReference type="Rhea" id="RHEA:19878"/>
    </physiologicalReaction>
</comment>
<comment type="subcellular location">
    <subcellularLocation>
        <location evidence="1">Cytoplasm</location>
        <location evidence="1">Cytosol</location>
    </subcellularLocation>
    <subcellularLocation>
        <location evidence="1">Golgi apparatus membrane</location>
        <topology evidence="1">Peripheral membrane protein</topology>
    </subcellularLocation>
    <subcellularLocation>
        <location evidence="1">Endoplasmic reticulum membrane</location>
    </subcellularLocation>
    <subcellularLocation>
        <location evidence="1">Cell membrane</location>
    </subcellularLocation>
    <subcellularLocation>
        <location evidence="1">Early endosome membrane</location>
    </subcellularLocation>
</comment>
<comment type="similarity">
    <text evidence="5">Belongs to the PI3/PI4-kinase family. Type II PI4K subfamily.</text>
</comment>
<sequence length="492" mass="55770">MEPKQTADARDSPPLLVFLEPAAEEVTAHTAPLSPNPQSARAAPGSAVRFFSDSAREEEAGEDEPLLKKSGPVSPRAARKGRTRLSSSSDRENMSGGHVGNGEFNVILDDLEFADIIHRAEQAIESGVFPERISQGSSGSYFVKDPKGKIIGVFKPKSEEPYGHLNPKWTKYFHKICCPCCFGRGCLVPNQGYLSEAGAYLVDEKLGLGVVPKTKVVWLVSETFNYSAIDRAKSRGKKYALEKVPKVGRKFHRIGLPPKVGSFQLFVDGYKEADYWLRKFETDPLPENTRKQLQCQFEKLVILDYVIRNTDRGNDNWLIRYDSQDDDELMEKGDDFPLKDWKEIKEPVIKIAAIDNGLAFPFKHPDEWRAYPFHWAWLPQAKVPFSQETRDLILPRISDMNFVQDLCEDLYELFKTDKGFDKATFEKQMSVMRGQILNLTQALKDGKTPIQLVQMPRVVVERSCSGSQGRIVQMSNAFTQTFHCRKPFFSSW</sequence>
<organism>
    <name type="scientific">Xenopus tropicalis</name>
    <name type="common">Western clawed frog</name>
    <name type="synonym">Silurana tropicalis</name>
    <dbReference type="NCBI Taxonomy" id="8364"/>
    <lineage>
        <taxon>Eukaryota</taxon>
        <taxon>Metazoa</taxon>
        <taxon>Chordata</taxon>
        <taxon>Craniata</taxon>
        <taxon>Vertebrata</taxon>
        <taxon>Euteleostomi</taxon>
        <taxon>Amphibia</taxon>
        <taxon>Batrachia</taxon>
        <taxon>Anura</taxon>
        <taxon>Pipoidea</taxon>
        <taxon>Pipidae</taxon>
        <taxon>Xenopodinae</taxon>
        <taxon>Xenopus</taxon>
        <taxon>Silurana</taxon>
    </lineage>
</organism>
<proteinExistence type="evidence at transcript level"/>
<keyword id="KW-0067">ATP-binding</keyword>
<keyword id="KW-1003">Cell membrane</keyword>
<keyword id="KW-0963">Cytoplasm</keyword>
<keyword id="KW-0256">Endoplasmic reticulum</keyword>
<keyword id="KW-0967">Endosome</keyword>
<keyword id="KW-0333">Golgi apparatus</keyword>
<keyword id="KW-0418">Kinase</keyword>
<keyword id="KW-0443">Lipid metabolism</keyword>
<keyword id="KW-0472">Membrane</keyword>
<keyword id="KW-0547">Nucleotide-binding</keyword>
<keyword id="KW-1185">Reference proteome</keyword>
<keyword id="KW-0808">Transferase</keyword>
<gene>
    <name type="primary">pi4k2b</name>
    <name type="ORF">TGas067g11.1</name>
</gene>
<feature type="chain" id="PRO_0000285170" description="Phosphatidylinositol 4-kinase type 2-beta">
    <location>
        <begin position="1"/>
        <end position="492"/>
    </location>
</feature>
<feature type="domain" description="PI3K/PI4K catalytic" evidence="3">
    <location>
        <begin position="127"/>
        <end position="462"/>
    </location>
</feature>
<feature type="region of interest" description="Disordered" evidence="4">
    <location>
        <begin position="1"/>
        <end position="98"/>
    </location>
</feature>
<feature type="region of interest" description="G-loop" evidence="3">
    <location>
        <begin position="133"/>
        <end position="139"/>
    </location>
</feature>
<feature type="region of interest" description="Important for substrate binding" evidence="2">
    <location>
        <begin position="160"/>
        <end position="162"/>
    </location>
</feature>
<feature type="region of interest" description="Important for interaction with membranes" evidence="2">
    <location>
        <begin position="168"/>
        <end position="181"/>
    </location>
</feature>
<feature type="region of interest" description="Important for interaction with membranes" evidence="2">
    <location>
        <begin position="271"/>
        <end position="279"/>
    </location>
</feature>
<feature type="region of interest" description="Catalytic loop" evidence="3">
    <location>
        <begin position="308"/>
        <end position="316"/>
    </location>
</feature>
<feature type="region of interest" description="Activation loop" evidence="3">
    <location>
        <begin position="353"/>
        <end position="373"/>
    </location>
</feature>
<feature type="region of interest" description="Important for interaction with membranes" evidence="2">
    <location>
        <begin position="368"/>
        <end position="377"/>
    </location>
</feature>
<feature type="compositionally biased region" description="Basic and acidic residues" evidence="4">
    <location>
        <begin position="1"/>
        <end position="11"/>
    </location>
</feature>
<feature type="binding site" evidence="1">
    <location>
        <position position="140"/>
    </location>
    <ligand>
        <name>ATP</name>
        <dbReference type="ChEBI" id="CHEBI:30616"/>
    </ligand>
</feature>
<feature type="binding site" evidence="1">
    <location>
        <position position="155"/>
    </location>
    <ligand>
        <name>ATP</name>
        <dbReference type="ChEBI" id="CHEBI:30616"/>
    </ligand>
</feature>
<feature type="binding site" evidence="1">
    <location>
        <begin position="264"/>
        <end position="267"/>
    </location>
    <ligand>
        <name>ATP</name>
        <dbReference type="ChEBI" id="CHEBI:30616"/>
    </ligand>
</feature>
<feature type="binding site" evidence="1">
    <location>
        <begin position="278"/>
        <end position="279"/>
    </location>
    <ligand>
        <name>ATP</name>
        <dbReference type="ChEBI" id="CHEBI:30616"/>
    </ligand>
</feature>
<feature type="binding site" evidence="1">
    <location>
        <position position="355"/>
    </location>
    <ligand>
        <name>ATP</name>
        <dbReference type="ChEBI" id="CHEBI:30616"/>
    </ligand>
</feature>